<organism>
    <name type="scientific">Arabidopsis thaliana</name>
    <name type="common">Mouse-ear cress</name>
    <dbReference type="NCBI Taxonomy" id="3702"/>
    <lineage>
        <taxon>Eukaryota</taxon>
        <taxon>Viridiplantae</taxon>
        <taxon>Streptophyta</taxon>
        <taxon>Embryophyta</taxon>
        <taxon>Tracheophyta</taxon>
        <taxon>Spermatophyta</taxon>
        <taxon>Magnoliopsida</taxon>
        <taxon>eudicotyledons</taxon>
        <taxon>Gunneridae</taxon>
        <taxon>Pentapetalae</taxon>
        <taxon>rosids</taxon>
        <taxon>malvids</taxon>
        <taxon>Brassicales</taxon>
        <taxon>Brassicaceae</taxon>
        <taxon>Camelineae</taxon>
        <taxon>Arabidopsis</taxon>
    </lineage>
</organism>
<accession>Q8LPT3</accession>
<accession>Q93ZP6</accession>
<accession>Q9STN9</accession>
<sequence>MGSAAELTEPTTGTEKLHQPIEVEEDDEQIVDLERKTFRHGKGHDTSVDSSTITNTSSSSSSSFSGDGGTEETPDFHSNGDGEHTDLVNLEVPELETEIVFHQEHDDGKNCIVFFDGEQGSESAGAIPDAHEESQTADLNGEQTQLEPENGSTSEDNERSREIEEVLDGDVSKDLDAVDPLAGEVIEEEVDFEDVEYHDVENMMDKQETHDLYCPNCDSCITKKVILKRRKRKIRRHELGDSKRPHLTEPLFHSEDNLPSLDGGENSANESFVFKCLSCFTIFIPKGVSSKPIPPRQGVEGLKIQPNPQVEATGDSNWFSSIFGLNKKESAIQQGGASSSVLEANPPPRESIVPVVNPSRGNLSPMRKDTTGSAVVQPDAATSIQVAKSNDTSEIVNNGAIVGDGQKFLAPMVEEQTQQKIDNDDSSTADGNHTSDKGRLSPIQPSHGMSILNTVTNGPDGLKVETTIHEEGAPLLFEGKDTPDTSTADFGLTKVTGVMDTGDRGVITGPANPEIDISAGNLLEEGSLREPLMRRVVVQGRKLEILKSIVYGGLLEAITSLGVISSAAGSGASMLNILVLGLANLLGGLILIIHNLQELREEEPIRTTTEDNQTNGREEEEGRYKRLLGRRENFTLHATVAILSFIITGILPPVVYYFSFSEKHNKDYKVASVFGASLFCIVLLAIAKAHVRYPRGSYLKSILYYGSIAVSVSGISYVVGNFLEQLLEKHGWSDGSETPVGQMMLSSLMGRKAGFGYSSSY</sequence>
<reference key="1">
    <citation type="journal article" date="1999" name="Nature">
        <title>Sequence and analysis of chromosome 4 of the plant Arabidopsis thaliana.</title>
        <authorList>
            <person name="Mayer K.F.X."/>
            <person name="Schueller C."/>
            <person name="Wambutt R."/>
            <person name="Murphy G."/>
            <person name="Volckaert G."/>
            <person name="Pohl T."/>
            <person name="Duesterhoeft A."/>
            <person name="Stiekema W."/>
            <person name="Entian K.-D."/>
            <person name="Terryn N."/>
            <person name="Harris B."/>
            <person name="Ansorge W."/>
            <person name="Brandt P."/>
            <person name="Grivell L.A."/>
            <person name="Rieger M."/>
            <person name="Weichselgartner M."/>
            <person name="de Simone V."/>
            <person name="Obermaier B."/>
            <person name="Mache R."/>
            <person name="Mueller M."/>
            <person name="Kreis M."/>
            <person name="Delseny M."/>
            <person name="Puigdomenech P."/>
            <person name="Watson M."/>
            <person name="Schmidtheini T."/>
            <person name="Reichert B."/>
            <person name="Portetelle D."/>
            <person name="Perez-Alonso M."/>
            <person name="Boutry M."/>
            <person name="Bancroft I."/>
            <person name="Vos P."/>
            <person name="Hoheisel J."/>
            <person name="Zimmermann W."/>
            <person name="Wedler H."/>
            <person name="Ridley P."/>
            <person name="Langham S.-A."/>
            <person name="McCullagh B."/>
            <person name="Bilham L."/>
            <person name="Robben J."/>
            <person name="van der Schueren J."/>
            <person name="Grymonprez B."/>
            <person name="Chuang Y.-J."/>
            <person name="Vandenbussche F."/>
            <person name="Braeken M."/>
            <person name="Weltjens I."/>
            <person name="Voet M."/>
            <person name="Bastiaens I."/>
            <person name="Aert R."/>
            <person name="Defoor E."/>
            <person name="Weitzenegger T."/>
            <person name="Bothe G."/>
            <person name="Ramsperger U."/>
            <person name="Hilbert H."/>
            <person name="Braun M."/>
            <person name="Holzer E."/>
            <person name="Brandt A."/>
            <person name="Peters S."/>
            <person name="van Staveren M."/>
            <person name="Dirkse W."/>
            <person name="Mooijman P."/>
            <person name="Klein Lankhorst R."/>
            <person name="Rose M."/>
            <person name="Hauf J."/>
            <person name="Koetter P."/>
            <person name="Berneiser S."/>
            <person name="Hempel S."/>
            <person name="Feldpausch M."/>
            <person name="Lamberth S."/>
            <person name="Van den Daele H."/>
            <person name="De Keyser A."/>
            <person name="Buysshaert C."/>
            <person name="Gielen J."/>
            <person name="Villarroel R."/>
            <person name="De Clercq R."/>
            <person name="van Montagu M."/>
            <person name="Rogers J."/>
            <person name="Cronin A."/>
            <person name="Quail M.A."/>
            <person name="Bray-Allen S."/>
            <person name="Clark L."/>
            <person name="Doggett J."/>
            <person name="Hall S."/>
            <person name="Kay M."/>
            <person name="Lennard N."/>
            <person name="McLay K."/>
            <person name="Mayes R."/>
            <person name="Pettett A."/>
            <person name="Rajandream M.A."/>
            <person name="Lyne M."/>
            <person name="Benes V."/>
            <person name="Rechmann S."/>
            <person name="Borkova D."/>
            <person name="Bloecker H."/>
            <person name="Scharfe M."/>
            <person name="Grimm M."/>
            <person name="Loehnert T.-H."/>
            <person name="Dose S."/>
            <person name="de Haan M."/>
            <person name="Maarse A.C."/>
            <person name="Schaefer M."/>
            <person name="Mueller-Auer S."/>
            <person name="Gabel C."/>
            <person name="Fuchs M."/>
            <person name="Fartmann B."/>
            <person name="Granderath K."/>
            <person name="Dauner D."/>
            <person name="Herzl A."/>
            <person name="Neumann S."/>
            <person name="Argiriou A."/>
            <person name="Vitale D."/>
            <person name="Liguori R."/>
            <person name="Piravandi E."/>
            <person name="Massenet O."/>
            <person name="Quigley F."/>
            <person name="Clabauld G."/>
            <person name="Muendlein A."/>
            <person name="Felber R."/>
            <person name="Schnabl S."/>
            <person name="Hiller R."/>
            <person name="Schmidt W."/>
            <person name="Lecharny A."/>
            <person name="Aubourg S."/>
            <person name="Chefdor F."/>
            <person name="Cooke R."/>
            <person name="Berger C."/>
            <person name="Monfort A."/>
            <person name="Casacuberta E."/>
            <person name="Gibbons T."/>
            <person name="Weber N."/>
            <person name="Vandenbol M."/>
            <person name="Bargues M."/>
            <person name="Terol J."/>
            <person name="Torres A."/>
            <person name="Perez-Perez A."/>
            <person name="Purnelle B."/>
            <person name="Bent E."/>
            <person name="Johnson S."/>
            <person name="Tacon D."/>
            <person name="Jesse T."/>
            <person name="Heijnen L."/>
            <person name="Schwarz S."/>
            <person name="Scholler P."/>
            <person name="Heber S."/>
            <person name="Francs P."/>
            <person name="Bielke C."/>
            <person name="Frishman D."/>
            <person name="Haase D."/>
            <person name="Lemcke K."/>
            <person name="Mewes H.-W."/>
            <person name="Stocker S."/>
            <person name="Zaccaria P."/>
            <person name="Bevan M."/>
            <person name="Wilson R.K."/>
            <person name="de la Bastide M."/>
            <person name="Habermann K."/>
            <person name="Parnell L."/>
            <person name="Dedhia N."/>
            <person name="Gnoj L."/>
            <person name="Schutz K."/>
            <person name="Huang E."/>
            <person name="Spiegel L."/>
            <person name="Sekhon M."/>
            <person name="Murray J."/>
            <person name="Sheet P."/>
            <person name="Cordes M."/>
            <person name="Abu-Threideh J."/>
            <person name="Stoneking T."/>
            <person name="Kalicki J."/>
            <person name="Graves T."/>
            <person name="Harmon G."/>
            <person name="Edwards J."/>
            <person name="Latreille P."/>
            <person name="Courtney L."/>
            <person name="Cloud J."/>
            <person name="Abbott A."/>
            <person name="Scott K."/>
            <person name="Johnson D."/>
            <person name="Minx P."/>
            <person name="Bentley D."/>
            <person name="Fulton B."/>
            <person name="Miller N."/>
            <person name="Greco T."/>
            <person name="Kemp K."/>
            <person name="Kramer J."/>
            <person name="Fulton L."/>
            <person name="Mardis E."/>
            <person name="Dante M."/>
            <person name="Pepin K."/>
            <person name="Hillier L.W."/>
            <person name="Nelson J."/>
            <person name="Spieth J."/>
            <person name="Ryan E."/>
            <person name="Andrews S."/>
            <person name="Geisel C."/>
            <person name="Layman D."/>
            <person name="Du H."/>
            <person name="Ali J."/>
            <person name="Berghoff A."/>
            <person name="Jones K."/>
            <person name="Drone K."/>
            <person name="Cotton M."/>
            <person name="Joshu C."/>
            <person name="Antonoiu B."/>
            <person name="Zidanic M."/>
            <person name="Strong C."/>
            <person name="Sun H."/>
            <person name="Lamar B."/>
            <person name="Yordan C."/>
            <person name="Ma P."/>
            <person name="Zhong J."/>
            <person name="Preston R."/>
            <person name="Vil D."/>
            <person name="Shekher M."/>
            <person name="Matero A."/>
            <person name="Shah R."/>
            <person name="Swaby I.K."/>
            <person name="O'Shaughnessy A."/>
            <person name="Rodriguez M."/>
            <person name="Hoffman J."/>
            <person name="Till S."/>
            <person name="Granat S."/>
            <person name="Shohdy N."/>
            <person name="Hasegawa A."/>
            <person name="Hameed A."/>
            <person name="Lodhi M."/>
            <person name="Johnson A."/>
            <person name="Chen E."/>
            <person name="Marra M.A."/>
            <person name="Martienssen R."/>
            <person name="McCombie W.R."/>
        </authorList>
    </citation>
    <scope>NUCLEOTIDE SEQUENCE [LARGE SCALE GENOMIC DNA]</scope>
    <source>
        <strain>cv. Columbia</strain>
    </source>
</reference>
<reference key="2">
    <citation type="journal article" date="2017" name="Plant J.">
        <title>Araport11: a complete reannotation of the Arabidopsis thaliana reference genome.</title>
        <authorList>
            <person name="Cheng C.Y."/>
            <person name="Krishnakumar V."/>
            <person name="Chan A.P."/>
            <person name="Thibaud-Nissen F."/>
            <person name="Schobel S."/>
            <person name="Town C.D."/>
        </authorList>
    </citation>
    <scope>GENOME REANNOTATION</scope>
    <source>
        <strain>cv. Columbia</strain>
    </source>
</reference>
<reference key="3">
    <citation type="journal article" date="2003" name="Science">
        <title>Empirical analysis of transcriptional activity in the Arabidopsis genome.</title>
        <authorList>
            <person name="Yamada K."/>
            <person name="Lim J."/>
            <person name="Dale J.M."/>
            <person name="Chen H."/>
            <person name="Shinn P."/>
            <person name="Palm C.J."/>
            <person name="Southwick A.M."/>
            <person name="Wu H.C."/>
            <person name="Kim C.J."/>
            <person name="Nguyen M."/>
            <person name="Pham P.K."/>
            <person name="Cheuk R.F."/>
            <person name="Karlin-Newmann G."/>
            <person name="Liu S.X."/>
            <person name="Lam B."/>
            <person name="Sakano H."/>
            <person name="Wu T."/>
            <person name="Yu G."/>
            <person name="Miranda M."/>
            <person name="Quach H.L."/>
            <person name="Tripp M."/>
            <person name="Chang C.H."/>
            <person name="Lee J.M."/>
            <person name="Toriumi M.J."/>
            <person name="Chan M.M."/>
            <person name="Tang C.C."/>
            <person name="Onodera C.S."/>
            <person name="Deng J.M."/>
            <person name="Akiyama K."/>
            <person name="Ansari Y."/>
            <person name="Arakawa T."/>
            <person name="Banh J."/>
            <person name="Banno F."/>
            <person name="Bowser L."/>
            <person name="Brooks S.Y."/>
            <person name="Carninci P."/>
            <person name="Chao Q."/>
            <person name="Choy N."/>
            <person name="Enju A."/>
            <person name="Goldsmith A.D."/>
            <person name="Gurjal M."/>
            <person name="Hansen N.F."/>
            <person name="Hayashizaki Y."/>
            <person name="Johnson-Hopson C."/>
            <person name="Hsuan V.W."/>
            <person name="Iida K."/>
            <person name="Karnes M."/>
            <person name="Khan S."/>
            <person name="Koesema E."/>
            <person name="Ishida J."/>
            <person name="Jiang P.X."/>
            <person name="Jones T."/>
            <person name="Kawai J."/>
            <person name="Kamiya A."/>
            <person name="Meyers C."/>
            <person name="Nakajima M."/>
            <person name="Narusaka M."/>
            <person name="Seki M."/>
            <person name="Sakurai T."/>
            <person name="Satou M."/>
            <person name="Tamse R."/>
            <person name="Vaysberg M."/>
            <person name="Wallender E.K."/>
            <person name="Wong C."/>
            <person name="Yamamura Y."/>
            <person name="Yuan S."/>
            <person name="Shinozaki K."/>
            <person name="Davis R.W."/>
            <person name="Theologis A."/>
            <person name="Ecker J.R."/>
        </authorList>
    </citation>
    <scope>NUCLEOTIDE SEQUENCE [LARGE SCALE MRNA]</scope>
    <source>
        <strain>cv. Columbia</strain>
    </source>
</reference>
<reference key="4">
    <citation type="journal article" date="2013" name="Plant Physiol.">
        <title>Identification of two novel endoplasmic reticulum body-specific integral membrane proteins.</title>
        <authorList>
            <person name="Yamada K."/>
            <person name="Nagano A.J."/>
            <person name="Nishina M."/>
            <person name="Hara-Nishimura I."/>
            <person name="Nishimura M."/>
        </authorList>
    </citation>
    <scope>IDENTIFICATION</scope>
    <scope>FUNCTION</scope>
    <scope>INDUCTION</scope>
    <source>
        <strain>cv. Columbia</strain>
    </source>
</reference>
<protein>
    <recommendedName>
        <fullName>Membrane protein of ER body-like protein</fullName>
    </recommendedName>
</protein>
<proteinExistence type="evidence at transcript level"/>
<gene>
    <name type="primary">MEBL</name>
    <name type="ordered locus">At4g27870</name>
    <name type="ORF">T27E11.110</name>
</gene>
<comment type="function">
    <text evidence="4">Not essential for the accumulation of ER body components, including PYK10.</text>
</comment>
<comment type="subcellular location">
    <subcellularLocation>
        <location evidence="1">Endoplasmic reticulum membrane</location>
        <topology evidence="1">Multi-pass membrane protein</topology>
    </subcellularLocation>
</comment>
<comment type="induction">
    <text evidence="4">Not induced by NAI1.</text>
</comment>
<comment type="similarity">
    <text evidence="5">Belongs to the CCC1 family.</text>
</comment>
<comment type="sequence caution" evidence="5">
    <conflict type="frameshift">
        <sequence resource="EMBL-CDS" id="AAL08260"/>
    </conflict>
</comment>
<comment type="sequence caution" evidence="5">
    <conflict type="erroneous gene model prediction">
        <sequence resource="EMBL-CDS" id="CAB43975"/>
    </conflict>
</comment>
<comment type="sequence caution" evidence="5">
    <conflict type="erroneous gene model prediction">
        <sequence resource="EMBL-CDS" id="CAB81436"/>
    </conflict>
</comment>
<feature type="chain" id="PRO_0000430469" description="Membrane protein of ER body-like protein">
    <location>
        <begin position="1"/>
        <end position="761"/>
    </location>
</feature>
<feature type="transmembrane region" description="Helical; Name=1" evidence="2">
    <location>
        <begin position="549"/>
        <end position="569"/>
    </location>
</feature>
<feature type="transmembrane region" description="Helical; Name=2" evidence="2">
    <location>
        <begin position="573"/>
        <end position="593"/>
    </location>
</feature>
<feature type="transmembrane region" description="Helical; Name=3" evidence="2">
    <location>
        <begin position="640"/>
        <end position="660"/>
    </location>
</feature>
<feature type="transmembrane region" description="Helical; Name=4" evidence="2">
    <location>
        <begin position="670"/>
        <end position="690"/>
    </location>
</feature>
<feature type="transmembrane region" description="Helical; Name=5" evidence="2">
    <location>
        <begin position="702"/>
        <end position="722"/>
    </location>
</feature>
<feature type="region of interest" description="Disordered" evidence="3">
    <location>
        <begin position="1"/>
        <end position="85"/>
    </location>
</feature>
<feature type="region of interest" description="Disordered" evidence="3">
    <location>
        <begin position="120"/>
        <end position="162"/>
    </location>
</feature>
<feature type="region of interest" description="Disordered" evidence="3">
    <location>
        <begin position="338"/>
        <end position="374"/>
    </location>
</feature>
<feature type="region of interest" description="Disordered" evidence="3">
    <location>
        <begin position="416"/>
        <end position="448"/>
    </location>
</feature>
<feature type="coiled-coil region" evidence="2">
    <location>
        <begin position="186"/>
        <end position="206"/>
    </location>
</feature>
<feature type="compositionally biased region" description="Acidic residues" evidence="3">
    <location>
        <begin position="22"/>
        <end position="31"/>
    </location>
</feature>
<feature type="compositionally biased region" description="Low complexity" evidence="3">
    <location>
        <begin position="48"/>
        <end position="65"/>
    </location>
</feature>
<feature type="compositionally biased region" description="Basic and acidic residues" evidence="3">
    <location>
        <begin position="74"/>
        <end position="85"/>
    </location>
</feature>
<feature type="compositionally biased region" description="Polar residues" evidence="3">
    <location>
        <begin position="136"/>
        <end position="154"/>
    </location>
</feature>
<feature type="compositionally biased region" description="Polar residues" evidence="3">
    <location>
        <begin position="416"/>
        <end position="432"/>
    </location>
</feature>
<name>MEBL_ARATH</name>
<keyword id="KW-0175">Coiled coil</keyword>
<keyword id="KW-0256">Endoplasmic reticulum</keyword>
<keyword id="KW-0472">Membrane</keyword>
<keyword id="KW-1185">Reference proteome</keyword>
<keyword id="KW-0812">Transmembrane</keyword>
<keyword id="KW-1133">Transmembrane helix</keyword>
<dbReference type="EMBL" id="AL078579">
    <property type="protein sequence ID" value="CAB43975.1"/>
    <property type="status" value="ALT_SEQ"/>
    <property type="molecule type" value="Genomic_DNA"/>
</dbReference>
<dbReference type="EMBL" id="AL161571">
    <property type="protein sequence ID" value="CAB81436.1"/>
    <property type="status" value="ALT_SEQ"/>
    <property type="molecule type" value="Genomic_DNA"/>
</dbReference>
<dbReference type="EMBL" id="CP002687">
    <property type="protein sequence ID" value="AEE85403.1"/>
    <property type="molecule type" value="Genomic_DNA"/>
</dbReference>
<dbReference type="EMBL" id="AY094391">
    <property type="protein sequence ID" value="AAM19770.1"/>
    <property type="molecule type" value="mRNA"/>
</dbReference>
<dbReference type="EMBL" id="BT002626">
    <property type="protein sequence ID" value="AAO11542.1"/>
    <property type="molecule type" value="mRNA"/>
</dbReference>
<dbReference type="EMBL" id="AY056404">
    <property type="protein sequence ID" value="AAL08260.1"/>
    <property type="status" value="ALT_FRAME"/>
    <property type="molecule type" value="mRNA"/>
</dbReference>
<dbReference type="PIR" id="T09026">
    <property type="entry name" value="T09026"/>
</dbReference>
<dbReference type="RefSeq" id="NP_567789.2">
    <property type="nucleotide sequence ID" value="NM_118925.3"/>
</dbReference>
<dbReference type="BioGRID" id="14187">
    <property type="interactions" value="1"/>
</dbReference>
<dbReference type="FunCoup" id="Q8LPT3">
    <property type="interactions" value="567"/>
</dbReference>
<dbReference type="IntAct" id="Q8LPT3">
    <property type="interactions" value="1"/>
</dbReference>
<dbReference type="STRING" id="3702.Q8LPT3"/>
<dbReference type="iPTMnet" id="Q8LPT3"/>
<dbReference type="SwissPalm" id="Q8LPT3"/>
<dbReference type="PaxDb" id="3702-AT4G27870.1"/>
<dbReference type="EnsemblPlants" id="AT4G27870.1">
    <property type="protein sequence ID" value="AT4G27870.1"/>
    <property type="gene ID" value="AT4G27870"/>
</dbReference>
<dbReference type="GeneID" id="828900"/>
<dbReference type="Gramene" id="AT4G27870.1">
    <property type="protein sequence ID" value="AT4G27870.1"/>
    <property type="gene ID" value="AT4G27870"/>
</dbReference>
<dbReference type="KEGG" id="ath:AT4G27870"/>
<dbReference type="Araport" id="AT4G27870"/>
<dbReference type="TAIR" id="AT4G27870"/>
<dbReference type="eggNOG" id="ENOG502QQ85">
    <property type="taxonomic scope" value="Eukaryota"/>
</dbReference>
<dbReference type="HOGENOM" id="CLU_429849_0_0_1"/>
<dbReference type="InParanoid" id="Q8LPT3"/>
<dbReference type="OrthoDB" id="1924921at2759"/>
<dbReference type="PhylomeDB" id="Q8LPT3"/>
<dbReference type="PRO" id="PR:Q8LPT3"/>
<dbReference type="Proteomes" id="UP000006548">
    <property type="component" value="Chromosome 4"/>
</dbReference>
<dbReference type="ExpressionAtlas" id="Q8LPT3">
    <property type="expression patterns" value="baseline and differential"/>
</dbReference>
<dbReference type="GO" id="GO:0005789">
    <property type="term" value="C:endoplasmic reticulum membrane"/>
    <property type="evidence" value="ECO:0007669"/>
    <property type="project" value="UniProtKB-SubCell"/>
</dbReference>
<dbReference type="GO" id="GO:0005886">
    <property type="term" value="C:plasma membrane"/>
    <property type="evidence" value="ECO:0007005"/>
    <property type="project" value="TAIR"/>
</dbReference>
<dbReference type="InterPro" id="IPR052843">
    <property type="entry name" value="ER_body_metal_sequester"/>
</dbReference>
<dbReference type="PANTHER" id="PTHR38937">
    <property type="entry name" value="MEMBRANE PROTEIN OF ER BODY-LIKE PROTEIN"/>
    <property type="match status" value="1"/>
</dbReference>
<dbReference type="PANTHER" id="PTHR38937:SF2">
    <property type="entry name" value="MEMBRANE PROTEIN OF ER BODY-LIKE PROTEIN ISOFORM X1"/>
    <property type="match status" value="1"/>
</dbReference>
<evidence type="ECO:0000250" key="1"/>
<evidence type="ECO:0000255" key="2"/>
<evidence type="ECO:0000256" key="3">
    <source>
        <dbReference type="SAM" id="MobiDB-lite"/>
    </source>
</evidence>
<evidence type="ECO:0000269" key="4">
    <source>
    </source>
</evidence>
<evidence type="ECO:0000305" key="5"/>